<comment type="function">
    <text evidence="2">Catalyzes the GTP-dependent ribosomal translocation step during translation elongation. During this step, the ribosome changes from the pre-translocational (PRE) to the post-translocational (POST) state as the newly formed A-site-bound peptidyl-tRNA and P-site-bound deacylated tRNA move to the P and E sites, respectively. Catalyzes the coordinated movement of the two tRNA molecules, the mRNA and conformational changes in the ribosome.</text>
</comment>
<comment type="subcellular location">
    <subcellularLocation>
        <location evidence="2">Cytoplasm</location>
    </subcellularLocation>
</comment>
<comment type="similarity">
    <text evidence="2">Belongs to the TRAFAC class translation factor GTPase superfamily. Classic translation factor GTPase family. EF-G/EF-2 subfamily.</text>
</comment>
<gene>
    <name evidence="2" type="primary">fusA</name>
    <name type="ordered locus">ECSE_3601</name>
</gene>
<proteinExistence type="inferred from homology"/>
<protein>
    <recommendedName>
        <fullName evidence="2">Elongation factor G</fullName>
        <shortName evidence="2">EF-G</shortName>
    </recommendedName>
</protein>
<evidence type="ECO:0000250" key="1"/>
<evidence type="ECO:0000255" key="2">
    <source>
        <dbReference type="HAMAP-Rule" id="MF_00054"/>
    </source>
</evidence>
<name>EFG_ECOSE</name>
<feature type="chain" id="PRO_1000091709" description="Elongation factor G">
    <location>
        <begin position="1"/>
        <end position="704"/>
    </location>
</feature>
<feature type="domain" description="tr-type G">
    <location>
        <begin position="8"/>
        <end position="290"/>
    </location>
</feature>
<feature type="binding site" evidence="2">
    <location>
        <begin position="17"/>
        <end position="24"/>
    </location>
    <ligand>
        <name>GTP</name>
        <dbReference type="ChEBI" id="CHEBI:37565"/>
    </ligand>
</feature>
<feature type="binding site" evidence="2">
    <location>
        <begin position="88"/>
        <end position="92"/>
    </location>
    <ligand>
        <name>GTP</name>
        <dbReference type="ChEBI" id="CHEBI:37565"/>
    </ligand>
</feature>
<feature type="binding site" evidence="2">
    <location>
        <begin position="142"/>
        <end position="145"/>
    </location>
    <ligand>
        <name>GTP</name>
        <dbReference type="ChEBI" id="CHEBI:37565"/>
    </ligand>
</feature>
<feature type="modified residue" description="N6-acetyllysine" evidence="1">
    <location>
        <position position="504"/>
    </location>
</feature>
<feature type="modified residue" description="N6-acetyllysine" evidence="1">
    <location>
        <position position="643"/>
    </location>
</feature>
<accession>B6I240</accession>
<reference key="1">
    <citation type="journal article" date="2008" name="DNA Res.">
        <title>Complete genome sequence and comparative analysis of the wild-type commensal Escherichia coli strain SE11 isolated from a healthy adult.</title>
        <authorList>
            <person name="Oshima K."/>
            <person name="Toh H."/>
            <person name="Ogura Y."/>
            <person name="Sasamoto H."/>
            <person name="Morita H."/>
            <person name="Park S.-H."/>
            <person name="Ooka T."/>
            <person name="Iyoda S."/>
            <person name="Taylor T.D."/>
            <person name="Hayashi T."/>
            <person name="Itoh K."/>
            <person name="Hattori M."/>
        </authorList>
    </citation>
    <scope>NUCLEOTIDE SEQUENCE [LARGE SCALE GENOMIC DNA]</scope>
    <source>
        <strain>SE11</strain>
    </source>
</reference>
<sequence>MARTTPIARYRNIGISAHIDAGKTTTTERILFYTGVNHKIGEVHDGAATMDWMEQEQERGITITSAATTAFWSGMAKQYEPHRINIIDTPGHVDFTIEVERSMRVLDGAVMVYCAVGGVQPQSETVWRQANKYKVPRIAFVNKMDRMGANFLKVVNQIKTRLGANPVPLQLAIGAEEHFTGVVDLVKMKAINWNDADQGVTFEYEDIPADMVELANEWHQNLIESAAEASEELMEKYLGGEELTEAEIKGALRQRVLNNEIILVTCGSAFKNKGVQAMLDAVIDYLPSPVDVPAINGILDDGKDTPAERHASDDEPFSALAFKIATDPFVGNLTFFRVYSGVVNSGDTVLNSVKAARERFGRIVQMHANKREEIKEVRAGDIAAAIGLKDVTTGDTLCDPDAPIILERMEFPEPVISIAVEPKTKADQEKMGLALGRLAKEDPSFRVWTDEESNQTIIAGMGELHLDIIVDRMKREFNVEANVGKPQVAYRETIRQKVTDVEGKHAKQSGGRGQYGHVVIDMYPLEPGSNPKGYEFINDIKGGVIPGEYIPAVDKGIQEQLKAGPLAGYPVVDMGIRLHFGSYHDVDSSELAFKLAASIAFKEGFKKAKPVLLEPIMKVEVETPEENTGDVIGDLSRRRGMLKGQESEVTGVKIHAEVPLSEMFGYATQLRSLTKGRASYTMEFLKYDEAPSNVAQAVIEARGK</sequence>
<dbReference type="EMBL" id="AP009240">
    <property type="protein sequence ID" value="BAG79125.1"/>
    <property type="molecule type" value="Genomic_DNA"/>
</dbReference>
<dbReference type="RefSeq" id="WP_000124700.1">
    <property type="nucleotide sequence ID" value="NC_011415.1"/>
</dbReference>
<dbReference type="SMR" id="B6I240"/>
<dbReference type="GeneID" id="93778658"/>
<dbReference type="KEGG" id="ecy:ECSE_3601"/>
<dbReference type="HOGENOM" id="CLU_002794_4_1_6"/>
<dbReference type="Proteomes" id="UP000008199">
    <property type="component" value="Chromosome"/>
</dbReference>
<dbReference type="GO" id="GO:0005737">
    <property type="term" value="C:cytoplasm"/>
    <property type="evidence" value="ECO:0007669"/>
    <property type="project" value="UniProtKB-SubCell"/>
</dbReference>
<dbReference type="GO" id="GO:0005525">
    <property type="term" value="F:GTP binding"/>
    <property type="evidence" value="ECO:0007669"/>
    <property type="project" value="UniProtKB-UniRule"/>
</dbReference>
<dbReference type="GO" id="GO:0003924">
    <property type="term" value="F:GTPase activity"/>
    <property type="evidence" value="ECO:0007669"/>
    <property type="project" value="InterPro"/>
</dbReference>
<dbReference type="GO" id="GO:0097216">
    <property type="term" value="F:guanosine tetraphosphate binding"/>
    <property type="evidence" value="ECO:0007669"/>
    <property type="project" value="UniProtKB-ARBA"/>
</dbReference>
<dbReference type="GO" id="GO:0003746">
    <property type="term" value="F:translation elongation factor activity"/>
    <property type="evidence" value="ECO:0007669"/>
    <property type="project" value="UniProtKB-UniRule"/>
</dbReference>
<dbReference type="GO" id="GO:0032790">
    <property type="term" value="P:ribosome disassembly"/>
    <property type="evidence" value="ECO:0007669"/>
    <property type="project" value="TreeGrafter"/>
</dbReference>
<dbReference type="CDD" id="cd01886">
    <property type="entry name" value="EF-G"/>
    <property type="match status" value="1"/>
</dbReference>
<dbReference type="CDD" id="cd16262">
    <property type="entry name" value="EFG_III"/>
    <property type="match status" value="1"/>
</dbReference>
<dbReference type="CDD" id="cd01434">
    <property type="entry name" value="EFG_mtEFG1_IV"/>
    <property type="match status" value="1"/>
</dbReference>
<dbReference type="CDD" id="cd03713">
    <property type="entry name" value="EFG_mtEFG_C"/>
    <property type="match status" value="1"/>
</dbReference>
<dbReference type="CDD" id="cd04088">
    <property type="entry name" value="EFG_mtEFG_II"/>
    <property type="match status" value="1"/>
</dbReference>
<dbReference type="FunFam" id="2.40.30.10:FF:000006">
    <property type="entry name" value="Elongation factor G"/>
    <property type="match status" value="1"/>
</dbReference>
<dbReference type="FunFam" id="3.30.230.10:FF:000003">
    <property type="entry name" value="Elongation factor G"/>
    <property type="match status" value="1"/>
</dbReference>
<dbReference type="FunFam" id="3.30.70.240:FF:000001">
    <property type="entry name" value="Elongation factor G"/>
    <property type="match status" value="1"/>
</dbReference>
<dbReference type="FunFam" id="3.30.70.870:FF:000001">
    <property type="entry name" value="Elongation factor G"/>
    <property type="match status" value="1"/>
</dbReference>
<dbReference type="FunFam" id="3.40.50.300:FF:000029">
    <property type="entry name" value="Elongation factor G"/>
    <property type="match status" value="1"/>
</dbReference>
<dbReference type="Gene3D" id="3.30.230.10">
    <property type="match status" value="1"/>
</dbReference>
<dbReference type="Gene3D" id="3.30.70.240">
    <property type="match status" value="1"/>
</dbReference>
<dbReference type="Gene3D" id="3.30.70.870">
    <property type="entry name" value="Elongation Factor G (Translational Gtpase), domain 3"/>
    <property type="match status" value="1"/>
</dbReference>
<dbReference type="Gene3D" id="3.40.50.300">
    <property type="entry name" value="P-loop containing nucleotide triphosphate hydrolases"/>
    <property type="match status" value="1"/>
</dbReference>
<dbReference type="Gene3D" id="2.40.30.10">
    <property type="entry name" value="Translation factors"/>
    <property type="match status" value="1"/>
</dbReference>
<dbReference type="HAMAP" id="MF_00054_B">
    <property type="entry name" value="EF_G_EF_2_B"/>
    <property type="match status" value="1"/>
</dbReference>
<dbReference type="InterPro" id="IPR041095">
    <property type="entry name" value="EFG_II"/>
</dbReference>
<dbReference type="InterPro" id="IPR009022">
    <property type="entry name" value="EFG_III"/>
</dbReference>
<dbReference type="InterPro" id="IPR035647">
    <property type="entry name" value="EFG_III/V"/>
</dbReference>
<dbReference type="InterPro" id="IPR047872">
    <property type="entry name" value="EFG_IV"/>
</dbReference>
<dbReference type="InterPro" id="IPR035649">
    <property type="entry name" value="EFG_V"/>
</dbReference>
<dbReference type="InterPro" id="IPR000640">
    <property type="entry name" value="EFG_V-like"/>
</dbReference>
<dbReference type="InterPro" id="IPR004161">
    <property type="entry name" value="EFTu-like_2"/>
</dbReference>
<dbReference type="InterPro" id="IPR031157">
    <property type="entry name" value="G_TR_CS"/>
</dbReference>
<dbReference type="InterPro" id="IPR027417">
    <property type="entry name" value="P-loop_NTPase"/>
</dbReference>
<dbReference type="InterPro" id="IPR020568">
    <property type="entry name" value="Ribosomal_Su5_D2-typ_SF"/>
</dbReference>
<dbReference type="InterPro" id="IPR014721">
    <property type="entry name" value="Ribsml_uS5_D2-typ_fold_subgr"/>
</dbReference>
<dbReference type="InterPro" id="IPR005225">
    <property type="entry name" value="Small_GTP-bd"/>
</dbReference>
<dbReference type="InterPro" id="IPR000795">
    <property type="entry name" value="T_Tr_GTP-bd_dom"/>
</dbReference>
<dbReference type="InterPro" id="IPR009000">
    <property type="entry name" value="Transl_B-barrel_sf"/>
</dbReference>
<dbReference type="InterPro" id="IPR004540">
    <property type="entry name" value="Transl_elong_EFG/EF2"/>
</dbReference>
<dbReference type="InterPro" id="IPR005517">
    <property type="entry name" value="Transl_elong_EFG/EF2_IV"/>
</dbReference>
<dbReference type="NCBIfam" id="TIGR00484">
    <property type="entry name" value="EF-G"/>
    <property type="match status" value="1"/>
</dbReference>
<dbReference type="NCBIfam" id="NF009381">
    <property type="entry name" value="PRK12740.1-5"/>
    <property type="match status" value="1"/>
</dbReference>
<dbReference type="NCBIfam" id="TIGR00231">
    <property type="entry name" value="small_GTP"/>
    <property type="match status" value="1"/>
</dbReference>
<dbReference type="PANTHER" id="PTHR43261:SF1">
    <property type="entry name" value="RIBOSOME-RELEASING FACTOR 2, MITOCHONDRIAL"/>
    <property type="match status" value="1"/>
</dbReference>
<dbReference type="PANTHER" id="PTHR43261">
    <property type="entry name" value="TRANSLATION ELONGATION FACTOR G-RELATED"/>
    <property type="match status" value="1"/>
</dbReference>
<dbReference type="Pfam" id="PF00679">
    <property type="entry name" value="EFG_C"/>
    <property type="match status" value="1"/>
</dbReference>
<dbReference type="Pfam" id="PF14492">
    <property type="entry name" value="EFG_III"/>
    <property type="match status" value="1"/>
</dbReference>
<dbReference type="Pfam" id="PF03764">
    <property type="entry name" value="EFG_IV"/>
    <property type="match status" value="1"/>
</dbReference>
<dbReference type="Pfam" id="PF00009">
    <property type="entry name" value="GTP_EFTU"/>
    <property type="match status" value="1"/>
</dbReference>
<dbReference type="Pfam" id="PF03144">
    <property type="entry name" value="GTP_EFTU_D2"/>
    <property type="match status" value="1"/>
</dbReference>
<dbReference type="PRINTS" id="PR00315">
    <property type="entry name" value="ELONGATNFCT"/>
</dbReference>
<dbReference type="SMART" id="SM00838">
    <property type="entry name" value="EFG_C"/>
    <property type="match status" value="1"/>
</dbReference>
<dbReference type="SMART" id="SM00889">
    <property type="entry name" value="EFG_IV"/>
    <property type="match status" value="1"/>
</dbReference>
<dbReference type="SUPFAM" id="SSF54980">
    <property type="entry name" value="EF-G C-terminal domain-like"/>
    <property type="match status" value="2"/>
</dbReference>
<dbReference type="SUPFAM" id="SSF52540">
    <property type="entry name" value="P-loop containing nucleoside triphosphate hydrolases"/>
    <property type="match status" value="1"/>
</dbReference>
<dbReference type="SUPFAM" id="SSF54211">
    <property type="entry name" value="Ribosomal protein S5 domain 2-like"/>
    <property type="match status" value="1"/>
</dbReference>
<dbReference type="SUPFAM" id="SSF50447">
    <property type="entry name" value="Translation proteins"/>
    <property type="match status" value="1"/>
</dbReference>
<dbReference type="PROSITE" id="PS00301">
    <property type="entry name" value="G_TR_1"/>
    <property type="match status" value="1"/>
</dbReference>
<dbReference type="PROSITE" id="PS51722">
    <property type="entry name" value="G_TR_2"/>
    <property type="match status" value="1"/>
</dbReference>
<keyword id="KW-0007">Acetylation</keyword>
<keyword id="KW-0963">Cytoplasm</keyword>
<keyword id="KW-0251">Elongation factor</keyword>
<keyword id="KW-0342">GTP-binding</keyword>
<keyword id="KW-0547">Nucleotide-binding</keyword>
<keyword id="KW-0648">Protein biosynthesis</keyword>
<organism>
    <name type="scientific">Escherichia coli (strain SE11)</name>
    <dbReference type="NCBI Taxonomy" id="409438"/>
    <lineage>
        <taxon>Bacteria</taxon>
        <taxon>Pseudomonadati</taxon>
        <taxon>Pseudomonadota</taxon>
        <taxon>Gammaproteobacteria</taxon>
        <taxon>Enterobacterales</taxon>
        <taxon>Enterobacteriaceae</taxon>
        <taxon>Escherichia</taxon>
    </lineage>
</organism>